<feature type="chain" id="PRO_1000092053" description="5'/3'-nucleotidase SurE">
    <location>
        <begin position="1"/>
        <end position="254"/>
    </location>
</feature>
<feature type="binding site" evidence="1">
    <location>
        <position position="9"/>
    </location>
    <ligand>
        <name>a divalent metal cation</name>
        <dbReference type="ChEBI" id="CHEBI:60240"/>
    </ligand>
</feature>
<feature type="binding site" evidence="1">
    <location>
        <position position="10"/>
    </location>
    <ligand>
        <name>a divalent metal cation</name>
        <dbReference type="ChEBI" id="CHEBI:60240"/>
    </ligand>
</feature>
<feature type="binding site" evidence="1">
    <location>
        <position position="40"/>
    </location>
    <ligand>
        <name>a divalent metal cation</name>
        <dbReference type="ChEBI" id="CHEBI:60240"/>
    </ligand>
</feature>
<feature type="binding site" evidence="1">
    <location>
        <position position="93"/>
    </location>
    <ligand>
        <name>a divalent metal cation</name>
        <dbReference type="ChEBI" id="CHEBI:60240"/>
    </ligand>
</feature>
<dbReference type="EC" id="3.1.3.5" evidence="1"/>
<dbReference type="EC" id="3.1.3.6" evidence="1"/>
<dbReference type="EC" id="3.6.1.11" evidence="1"/>
<dbReference type="EMBL" id="CP000950">
    <property type="protein sequence ID" value="ACA69695.1"/>
    <property type="molecule type" value="Genomic_DNA"/>
</dbReference>
<dbReference type="RefSeq" id="WP_011191778.1">
    <property type="nucleotide sequence ID" value="NZ_CP009792.1"/>
</dbReference>
<dbReference type="SMR" id="B1JJF5"/>
<dbReference type="GeneID" id="49787219"/>
<dbReference type="KEGG" id="ypy:YPK_3428"/>
<dbReference type="PATRIC" id="fig|502800.11.peg.4166"/>
<dbReference type="GO" id="GO:0005737">
    <property type="term" value="C:cytoplasm"/>
    <property type="evidence" value="ECO:0007669"/>
    <property type="project" value="UniProtKB-SubCell"/>
</dbReference>
<dbReference type="GO" id="GO:0008254">
    <property type="term" value="F:3'-nucleotidase activity"/>
    <property type="evidence" value="ECO:0007669"/>
    <property type="project" value="UniProtKB-UniRule"/>
</dbReference>
<dbReference type="GO" id="GO:0008253">
    <property type="term" value="F:5'-nucleotidase activity"/>
    <property type="evidence" value="ECO:0007669"/>
    <property type="project" value="UniProtKB-UniRule"/>
</dbReference>
<dbReference type="GO" id="GO:0004309">
    <property type="term" value="F:exopolyphosphatase activity"/>
    <property type="evidence" value="ECO:0007669"/>
    <property type="project" value="UniProtKB-UniRule"/>
</dbReference>
<dbReference type="GO" id="GO:0046872">
    <property type="term" value="F:metal ion binding"/>
    <property type="evidence" value="ECO:0007669"/>
    <property type="project" value="UniProtKB-UniRule"/>
</dbReference>
<dbReference type="GO" id="GO:0000166">
    <property type="term" value="F:nucleotide binding"/>
    <property type="evidence" value="ECO:0007669"/>
    <property type="project" value="UniProtKB-KW"/>
</dbReference>
<dbReference type="FunFam" id="3.40.1210.10:FF:000001">
    <property type="entry name" value="5'/3'-nucleotidase SurE"/>
    <property type="match status" value="1"/>
</dbReference>
<dbReference type="Gene3D" id="3.40.1210.10">
    <property type="entry name" value="Survival protein SurE-like phosphatase/nucleotidase"/>
    <property type="match status" value="1"/>
</dbReference>
<dbReference type="HAMAP" id="MF_00060">
    <property type="entry name" value="SurE"/>
    <property type="match status" value="1"/>
</dbReference>
<dbReference type="InterPro" id="IPR030048">
    <property type="entry name" value="SurE"/>
</dbReference>
<dbReference type="InterPro" id="IPR002828">
    <property type="entry name" value="SurE-like_Pase/nucleotidase"/>
</dbReference>
<dbReference type="InterPro" id="IPR036523">
    <property type="entry name" value="SurE-like_sf"/>
</dbReference>
<dbReference type="NCBIfam" id="NF001488">
    <property type="entry name" value="PRK00346.1-1"/>
    <property type="match status" value="1"/>
</dbReference>
<dbReference type="NCBIfam" id="NF001489">
    <property type="entry name" value="PRK00346.1-3"/>
    <property type="match status" value="1"/>
</dbReference>
<dbReference type="NCBIfam" id="NF001490">
    <property type="entry name" value="PRK00346.1-4"/>
    <property type="match status" value="1"/>
</dbReference>
<dbReference type="NCBIfam" id="TIGR00087">
    <property type="entry name" value="surE"/>
    <property type="match status" value="1"/>
</dbReference>
<dbReference type="PANTHER" id="PTHR30457">
    <property type="entry name" value="5'-NUCLEOTIDASE SURE"/>
    <property type="match status" value="1"/>
</dbReference>
<dbReference type="PANTHER" id="PTHR30457:SF12">
    <property type="entry name" value="5'_3'-NUCLEOTIDASE SURE"/>
    <property type="match status" value="1"/>
</dbReference>
<dbReference type="Pfam" id="PF01975">
    <property type="entry name" value="SurE"/>
    <property type="match status" value="1"/>
</dbReference>
<dbReference type="SUPFAM" id="SSF64167">
    <property type="entry name" value="SurE-like"/>
    <property type="match status" value="1"/>
</dbReference>
<comment type="function">
    <text evidence="1">Nucleotidase with a broad substrate specificity as it can dephosphorylate various ribo- and deoxyribonucleoside 5'-monophosphates and ribonucleoside 3'-monophosphates with highest affinity to 3'-AMP. Also hydrolyzes polyphosphate (exopolyphosphatase activity) with the preference for short-chain-length substrates (P20-25). Might be involved in the regulation of dNTP and NTP pools, and in the turnover of 3'-mononucleotides produced by numerous intracellular RNases (T1, T2, and F) during the degradation of various RNAs.</text>
</comment>
<comment type="catalytic activity">
    <reaction evidence="1">
        <text>a ribonucleoside 5'-phosphate + H2O = a ribonucleoside + phosphate</text>
        <dbReference type="Rhea" id="RHEA:12484"/>
        <dbReference type="ChEBI" id="CHEBI:15377"/>
        <dbReference type="ChEBI" id="CHEBI:18254"/>
        <dbReference type="ChEBI" id="CHEBI:43474"/>
        <dbReference type="ChEBI" id="CHEBI:58043"/>
        <dbReference type="EC" id="3.1.3.5"/>
    </reaction>
</comment>
<comment type="catalytic activity">
    <reaction evidence="1">
        <text>a ribonucleoside 3'-phosphate + H2O = a ribonucleoside + phosphate</text>
        <dbReference type="Rhea" id="RHEA:10144"/>
        <dbReference type="ChEBI" id="CHEBI:13197"/>
        <dbReference type="ChEBI" id="CHEBI:15377"/>
        <dbReference type="ChEBI" id="CHEBI:18254"/>
        <dbReference type="ChEBI" id="CHEBI:43474"/>
        <dbReference type="EC" id="3.1.3.6"/>
    </reaction>
</comment>
<comment type="catalytic activity">
    <reaction evidence="1">
        <text>[phosphate](n) + H2O = [phosphate](n-1) + phosphate + H(+)</text>
        <dbReference type="Rhea" id="RHEA:21528"/>
        <dbReference type="Rhea" id="RHEA-COMP:9859"/>
        <dbReference type="Rhea" id="RHEA-COMP:14279"/>
        <dbReference type="ChEBI" id="CHEBI:15377"/>
        <dbReference type="ChEBI" id="CHEBI:15378"/>
        <dbReference type="ChEBI" id="CHEBI:16838"/>
        <dbReference type="ChEBI" id="CHEBI:43474"/>
        <dbReference type="EC" id="3.6.1.11"/>
    </reaction>
</comment>
<comment type="cofactor">
    <cofactor evidence="1">
        <name>a divalent metal cation</name>
        <dbReference type="ChEBI" id="CHEBI:60240"/>
    </cofactor>
    <text evidence="1">Binds 1 divalent metal cation per subunit.</text>
</comment>
<comment type="subcellular location">
    <subcellularLocation>
        <location evidence="1">Cytoplasm</location>
    </subcellularLocation>
</comment>
<comment type="similarity">
    <text evidence="1">Belongs to the SurE nucleotidase family.</text>
</comment>
<reference key="1">
    <citation type="submission" date="2008-02" db="EMBL/GenBank/DDBJ databases">
        <title>Complete sequence of Yersinia pseudotuberculosis YPIII.</title>
        <authorList>
            <consortium name="US DOE Joint Genome Institute"/>
            <person name="Copeland A."/>
            <person name="Lucas S."/>
            <person name="Lapidus A."/>
            <person name="Glavina del Rio T."/>
            <person name="Dalin E."/>
            <person name="Tice H."/>
            <person name="Bruce D."/>
            <person name="Goodwin L."/>
            <person name="Pitluck S."/>
            <person name="Munk A.C."/>
            <person name="Brettin T."/>
            <person name="Detter J.C."/>
            <person name="Han C."/>
            <person name="Tapia R."/>
            <person name="Schmutz J."/>
            <person name="Larimer F."/>
            <person name="Land M."/>
            <person name="Hauser L."/>
            <person name="Challacombe J.F."/>
            <person name="Green L."/>
            <person name="Lindler L.E."/>
            <person name="Nikolich M.P."/>
            <person name="Richardson P."/>
        </authorList>
    </citation>
    <scope>NUCLEOTIDE SEQUENCE [LARGE SCALE GENOMIC DNA]</scope>
    <source>
        <strain>YPIII</strain>
    </source>
</reference>
<protein>
    <recommendedName>
        <fullName evidence="1">5'/3'-nucleotidase SurE</fullName>
        <ecNumber evidence="1">3.1.3.5</ecNumber>
        <ecNumber evidence="1">3.1.3.6</ecNumber>
    </recommendedName>
    <alternativeName>
        <fullName evidence="1">Exopolyphosphatase</fullName>
        <ecNumber evidence="1">3.6.1.11</ecNumber>
    </alternativeName>
    <alternativeName>
        <fullName evidence="1">Nucleoside monophosphate phosphohydrolase</fullName>
    </alternativeName>
</protein>
<keyword id="KW-0963">Cytoplasm</keyword>
<keyword id="KW-0378">Hydrolase</keyword>
<keyword id="KW-0479">Metal-binding</keyword>
<keyword id="KW-0547">Nucleotide-binding</keyword>
<sequence>MIRILLSNDDGISAPGIQTLASALREFAQVQIVAPDRNRSGASNALTLDSALRITTLSNGDIAVQQGTPTDCVYLGVNALMRPRPDIVVSGINAGPNLGDDVIYSGTVAAAMEGRHLGYPALAVSLNGHQHYDTAAAVTCRLLRALQRKPLRTGKILNINVPDLPLSEIKGIRVTRCGSRHPAEQVFCQQDPRGQDLYWIGPPGEKYDAGPDTDFAAVEQGYVSITPLQVDLTAYTAQEVVESWLANTEVDGEW</sequence>
<gene>
    <name evidence="1" type="primary">surE</name>
    <name type="ordered locus">YPK_3428</name>
</gene>
<evidence type="ECO:0000255" key="1">
    <source>
        <dbReference type="HAMAP-Rule" id="MF_00060"/>
    </source>
</evidence>
<organism>
    <name type="scientific">Yersinia pseudotuberculosis serotype O:3 (strain YPIII)</name>
    <dbReference type="NCBI Taxonomy" id="502800"/>
    <lineage>
        <taxon>Bacteria</taxon>
        <taxon>Pseudomonadati</taxon>
        <taxon>Pseudomonadota</taxon>
        <taxon>Gammaproteobacteria</taxon>
        <taxon>Enterobacterales</taxon>
        <taxon>Yersiniaceae</taxon>
        <taxon>Yersinia</taxon>
    </lineage>
</organism>
<name>SURE_YERPY</name>
<proteinExistence type="inferred from homology"/>
<accession>B1JJF5</accession>